<accession>A9WWJ2</accession>
<name>RL31_BRUSI</name>
<gene>
    <name evidence="1" type="primary">rpmE</name>
    <name type="ordered locus">BSUIS_B1191</name>
</gene>
<protein>
    <recommendedName>
        <fullName evidence="1">Large ribosomal subunit protein bL31</fullName>
    </recommendedName>
    <alternativeName>
        <fullName evidence="2">50S ribosomal protein L31</fullName>
    </alternativeName>
</protein>
<sequence>MKANIHPDYHTIKVVMTDGTEYMTRSTWGKEGDTMNLDIDPTTHPAWTGGSQTLLDRGGRVTKFKNRFGNLGI</sequence>
<keyword id="KW-0687">Ribonucleoprotein</keyword>
<keyword id="KW-0689">Ribosomal protein</keyword>
<keyword id="KW-0694">RNA-binding</keyword>
<keyword id="KW-0699">rRNA-binding</keyword>
<reference key="1">
    <citation type="submission" date="2007-12" db="EMBL/GenBank/DDBJ databases">
        <title>Brucella suis ATCC 23445 whole genome shotgun sequencing project.</title>
        <authorList>
            <person name="Setubal J.C."/>
            <person name="Bowns C."/>
            <person name="Boyle S."/>
            <person name="Crasta O.R."/>
            <person name="Czar M.J."/>
            <person name="Dharmanolla C."/>
            <person name="Gillespie J.J."/>
            <person name="Kenyon R.W."/>
            <person name="Lu J."/>
            <person name="Mane S."/>
            <person name="Mohapatra S."/>
            <person name="Nagrani S."/>
            <person name="Purkayastha A."/>
            <person name="Rajasimha H.K."/>
            <person name="Shallom J.M."/>
            <person name="Shallom S."/>
            <person name="Shukla M."/>
            <person name="Snyder E.E."/>
            <person name="Sobral B.W."/>
            <person name="Wattam A.R."/>
            <person name="Will R."/>
            <person name="Williams K."/>
            <person name="Yoo H."/>
            <person name="Bruce D."/>
            <person name="Detter C."/>
            <person name="Munk C."/>
            <person name="Brettin T.S."/>
        </authorList>
    </citation>
    <scope>NUCLEOTIDE SEQUENCE [LARGE SCALE GENOMIC DNA]</scope>
    <source>
        <strain>ATCC 23445 / NCTC 10510</strain>
    </source>
</reference>
<proteinExistence type="inferred from homology"/>
<dbReference type="EMBL" id="CP000912">
    <property type="protein sequence ID" value="ABY40128.1"/>
    <property type="molecule type" value="Genomic_DNA"/>
</dbReference>
<dbReference type="RefSeq" id="WP_002964804.1">
    <property type="nucleotide sequence ID" value="NC_010167.1"/>
</dbReference>
<dbReference type="SMR" id="A9WWJ2"/>
<dbReference type="GeneID" id="97533132"/>
<dbReference type="KEGG" id="bmt:BSUIS_B1191"/>
<dbReference type="HOGENOM" id="CLU_114306_3_2_5"/>
<dbReference type="Proteomes" id="UP000008545">
    <property type="component" value="Chromosome II"/>
</dbReference>
<dbReference type="GO" id="GO:1990904">
    <property type="term" value="C:ribonucleoprotein complex"/>
    <property type="evidence" value="ECO:0007669"/>
    <property type="project" value="UniProtKB-KW"/>
</dbReference>
<dbReference type="GO" id="GO:0005840">
    <property type="term" value="C:ribosome"/>
    <property type="evidence" value="ECO:0007669"/>
    <property type="project" value="UniProtKB-KW"/>
</dbReference>
<dbReference type="GO" id="GO:0019843">
    <property type="term" value="F:rRNA binding"/>
    <property type="evidence" value="ECO:0007669"/>
    <property type="project" value="UniProtKB-KW"/>
</dbReference>
<dbReference type="GO" id="GO:0003735">
    <property type="term" value="F:structural constituent of ribosome"/>
    <property type="evidence" value="ECO:0007669"/>
    <property type="project" value="InterPro"/>
</dbReference>
<dbReference type="GO" id="GO:0006412">
    <property type="term" value="P:translation"/>
    <property type="evidence" value="ECO:0007669"/>
    <property type="project" value="UniProtKB-UniRule"/>
</dbReference>
<dbReference type="Gene3D" id="4.10.830.30">
    <property type="entry name" value="Ribosomal protein L31"/>
    <property type="match status" value="1"/>
</dbReference>
<dbReference type="HAMAP" id="MF_00501">
    <property type="entry name" value="Ribosomal_bL31_1"/>
    <property type="match status" value="1"/>
</dbReference>
<dbReference type="InterPro" id="IPR034704">
    <property type="entry name" value="Ribosomal_bL28/bL31-like_sf"/>
</dbReference>
<dbReference type="InterPro" id="IPR002150">
    <property type="entry name" value="Ribosomal_bL31"/>
</dbReference>
<dbReference type="InterPro" id="IPR027491">
    <property type="entry name" value="Ribosomal_bL31_A"/>
</dbReference>
<dbReference type="InterPro" id="IPR042105">
    <property type="entry name" value="Ribosomal_bL31_sf"/>
</dbReference>
<dbReference type="NCBIfam" id="TIGR00105">
    <property type="entry name" value="L31"/>
    <property type="match status" value="1"/>
</dbReference>
<dbReference type="NCBIfam" id="NF001809">
    <property type="entry name" value="PRK00528.1"/>
    <property type="match status" value="1"/>
</dbReference>
<dbReference type="PANTHER" id="PTHR33280">
    <property type="entry name" value="50S RIBOSOMAL PROTEIN L31, CHLOROPLASTIC"/>
    <property type="match status" value="1"/>
</dbReference>
<dbReference type="PANTHER" id="PTHR33280:SF6">
    <property type="entry name" value="LARGE RIBOSOMAL SUBUNIT PROTEIN BL31A"/>
    <property type="match status" value="1"/>
</dbReference>
<dbReference type="Pfam" id="PF01197">
    <property type="entry name" value="Ribosomal_L31"/>
    <property type="match status" value="1"/>
</dbReference>
<dbReference type="PRINTS" id="PR01249">
    <property type="entry name" value="RIBOSOMALL31"/>
</dbReference>
<dbReference type="SUPFAM" id="SSF143800">
    <property type="entry name" value="L28p-like"/>
    <property type="match status" value="1"/>
</dbReference>
<dbReference type="PROSITE" id="PS01143">
    <property type="entry name" value="RIBOSOMAL_L31"/>
    <property type="match status" value="1"/>
</dbReference>
<feature type="chain" id="PRO_1000126574" description="Large ribosomal subunit protein bL31">
    <location>
        <begin position="1"/>
        <end position="73"/>
    </location>
</feature>
<evidence type="ECO:0000255" key="1">
    <source>
        <dbReference type="HAMAP-Rule" id="MF_00501"/>
    </source>
</evidence>
<evidence type="ECO:0000305" key="2"/>
<comment type="function">
    <text evidence="1">Binds the 23S rRNA.</text>
</comment>
<comment type="subunit">
    <text evidence="1">Part of the 50S ribosomal subunit.</text>
</comment>
<comment type="similarity">
    <text evidence="1">Belongs to the bacterial ribosomal protein bL31 family. Type A subfamily.</text>
</comment>
<organism>
    <name type="scientific">Brucella suis (strain ATCC 23445 / NCTC 10510)</name>
    <dbReference type="NCBI Taxonomy" id="470137"/>
    <lineage>
        <taxon>Bacteria</taxon>
        <taxon>Pseudomonadati</taxon>
        <taxon>Pseudomonadota</taxon>
        <taxon>Alphaproteobacteria</taxon>
        <taxon>Hyphomicrobiales</taxon>
        <taxon>Brucellaceae</taxon>
        <taxon>Brucella/Ochrobactrum group</taxon>
        <taxon>Brucella</taxon>
    </lineage>
</organism>